<evidence type="ECO:0000255" key="1">
    <source>
        <dbReference type="HAMAP-Rule" id="MF_00909"/>
    </source>
</evidence>
<evidence type="ECO:0000256" key="2">
    <source>
        <dbReference type="SAM" id="MobiDB-lite"/>
    </source>
</evidence>
<evidence type="ECO:0000269" key="3">
    <source>
    </source>
</evidence>
<evidence type="ECO:0007829" key="4">
    <source>
        <dbReference type="PDB" id="5MN4"/>
    </source>
</evidence>
<evidence type="ECO:0007829" key="5">
    <source>
        <dbReference type="PDB" id="5MN5"/>
    </source>
</evidence>
<evidence type="ECO:0007829" key="6">
    <source>
        <dbReference type="PDB" id="5MN6"/>
    </source>
</evidence>
<evidence type="ECO:0007829" key="7">
    <source>
        <dbReference type="PDB" id="5MN7"/>
    </source>
</evidence>
<sequence length="390" mass="41037">MLEFEQGFNHLATLKVIGVGGGGNNAVNRMIDHGMNNVEFIAINTDGQALNLSKAESKIQIGEKLTRGLGAGANPEIGKKAAEESREQIEDAIQGADMVFVTSGMGGGTGTGAAPVVAKIAKEMGALTVGVVTRPFSFEGRKRQTQAAAGVEAMKAAVDTLIVIPNDRLLDIVDKSTPMMEAFKEADNVLRQGVQGISDLIAVSGEVNLDFADVKTIMSNQGSALMGIGVSSGENRAVEAAKKAISSPLLETSIVGAQGVLMNITGGESLSLFEAQEAADIVQDAADEDVNMIFGTVINPELQDEIVVTVIATGFDDKPTSHGRKSGSTGFGTSVNTSSNATSKDESFTSNSSNAQATDSVSERTHTTKEDDIPSFIRNREERRSRRTRR</sequence>
<reference key="1">
    <citation type="submission" date="1994-02" db="EMBL/GenBank/DDBJ databases">
        <title>Cloning and sequencing of an ftsZ homologue from Staphylococcus aureus.</title>
        <authorList>
            <person name="Alessi D.M."/>
            <person name="Olson E.R."/>
        </authorList>
    </citation>
    <scope>NUCLEOTIDE SEQUENCE [GENOMIC DNA]</scope>
    <source>
        <strain>SA4</strain>
    </source>
</reference>
<reference key="2">
    <citation type="journal article" date="2000" name="Biochem. Biophys. Res. Commun.">
        <title>A conserved residue at the extreme C-terminus of FtsZ is critical for the FtsA-FtsZ interaction in Staphylococcus aureus.</title>
        <authorList>
            <person name="Yan K."/>
            <person name="Pearce K.H."/>
            <person name="Payne D.J."/>
        </authorList>
    </citation>
    <scope>INTERACTION WITH FTSA</scope>
    <scope>SELF-INTERACTION</scope>
    <scope>MUTAGENESIS OF ASP-371; ASP-372; ILE-373; PRO-374; SER-375; PHE-376; ILE-377; ARG-378; ASN-379 AND ARG-380</scope>
    <source>
        <strain>WCUH29 / NCIMB 40771</strain>
    </source>
</reference>
<organism>
    <name type="scientific">Staphylococcus aureus</name>
    <dbReference type="NCBI Taxonomy" id="1280"/>
    <lineage>
        <taxon>Bacteria</taxon>
        <taxon>Bacillati</taxon>
        <taxon>Bacillota</taxon>
        <taxon>Bacilli</taxon>
        <taxon>Bacillales</taxon>
        <taxon>Staphylococcaceae</taxon>
        <taxon>Staphylococcus</taxon>
    </lineage>
</organism>
<protein>
    <recommendedName>
        <fullName evidence="1">Cell division protein FtsZ</fullName>
    </recommendedName>
</protein>
<dbReference type="EMBL" id="U06462">
    <property type="protein sequence ID" value="AAA16512.1"/>
    <property type="molecule type" value="Unassigned_DNA"/>
</dbReference>
<dbReference type="PIR" id="S58814">
    <property type="entry name" value="S58814"/>
</dbReference>
<dbReference type="RefSeq" id="WP_000888997.1">
    <property type="nucleotide sequence ID" value="NZ_WYDB01000002.1"/>
</dbReference>
<dbReference type="PDB" id="4DXD">
    <property type="method" value="X-ray"/>
    <property type="resolution" value="2.01 A"/>
    <property type="chains" value="A=2-390"/>
</dbReference>
<dbReference type="PDB" id="5MN4">
    <property type="method" value="X-ray"/>
    <property type="resolution" value="1.50 A"/>
    <property type="chains" value="A=12-316"/>
</dbReference>
<dbReference type="PDB" id="5MN5">
    <property type="method" value="X-ray"/>
    <property type="resolution" value="2.80 A"/>
    <property type="chains" value="A/B=12-316"/>
</dbReference>
<dbReference type="PDB" id="5MN6">
    <property type="method" value="X-ray"/>
    <property type="resolution" value="3.20 A"/>
    <property type="chains" value="A/B=12-316"/>
</dbReference>
<dbReference type="PDB" id="5MN7">
    <property type="method" value="X-ray"/>
    <property type="resolution" value="3.30 A"/>
    <property type="chains" value="A/B=12-316"/>
</dbReference>
<dbReference type="PDB" id="5MN8">
    <property type="method" value="X-ray"/>
    <property type="resolution" value="3.50 A"/>
    <property type="chains" value="A/B=12-316"/>
</dbReference>
<dbReference type="PDB" id="6KVP">
    <property type="method" value="X-ray"/>
    <property type="resolution" value="1.40 A"/>
    <property type="chains" value="A=12-316"/>
</dbReference>
<dbReference type="PDB" id="6KVQ">
    <property type="method" value="X-ray"/>
    <property type="resolution" value="1.60 A"/>
    <property type="chains" value="A=12-316"/>
</dbReference>
<dbReference type="PDB" id="6YD1">
    <property type="method" value="X-ray"/>
    <property type="resolution" value="1.70 A"/>
    <property type="chains" value="A=12-315"/>
</dbReference>
<dbReference type="PDB" id="6YD5">
    <property type="method" value="X-ray"/>
    <property type="resolution" value="1.55 A"/>
    <property type="chains" value="A=12-315"/>
</dbReference>
<dbReference type="PDB" id="6YD6">
    <property type="method" value="X-ray"/>
    <property type="resolution" value="1.70 A"/>
    <property type="chains" value="A=12-315"/>
</dbReference>
<dbReference type="PDBsum" id="4DXD"/>
<dbReference type="PDBsum" id="5MN4"/>
<dbReference type="PDBsum" id="5MN5"/>
<dbReference type="PDBsum" id="5MN6"/>
<dbReference type="PDBsum" id="5MN7"/>
<dbReference type="PDBsum" id="5MN8"/>
<dbReference type="PDBsum" id="6KVP"/>
<dbReference type="PDBsum" id="6KVQ"/>
<dbReference type="PDBsum" id="6YD1"/>
<dbReference type="PDBsum" id="6YD5"/>
<dbReference type="PDBsum" id="6YD6"/>
<dbReference type="SMR" id="P0A031"/>
<dbReference type="BindingDB" id="P0A031"/>
<dbReference type="ChEMBL" id="CHEMBL5096"/>
<dbReference type="GeneID" id="98345502"/>
<dbReference type="OMA" id="GNPSIGQ"/>
<dbReference type="OrthoDB" id="9813375at2"/>
<dbReference type="EvolutionaryTrace" id="P0A031"/>
<dbReference type="PRO" id="PR:P0A031"/>
<dbReference type="GO" id="GO:0032153">
    <property type="term" value="C:cell division site"/>
    <property type="evidence" value="ECO:0007669"/>
    <property type="project" value="UniProtKB-UniRule"/>
</dbReference>
<dbReference type="GO" id="GO:0005737">
    <property type="term" value="C:cytoplasm"/>
    <property type="evidence" value="ECO:0007669"/>
    <property type="project" value="UniProtKB-SubCell"/>
</dbReference>
<dbReference type="GO" id="GO:0005525">
    <property type="term" value="F:GTP binding"/>
    <property type="evidence" value="ECO:0007669"/>
    <property type="project" value="UniProtKB-UniRule"/>
</dbReference>
<dbReference type="GO" id="GO:0003924">
    <property type="term" value="F:GTPase activity"/>
    <property type="evidence" value="ECO:0007669"/>
    <property type="project" value="UniProtKB-UniRule"/>
</dbReference>
<dbReference type="GO" id="GO:0000917">
    <property type="term" value="P:division septum assembly"/>
    <property type="evidence" value="ECO:0007669"/>
    <property type="project" value="UniProtKB-KW"/>
</dbReference>
<dbReference type="GO" id="GO:0043093">
    <property type="term" value="P:FtsZ-dependent cytokinesis"/>
    <property type="evidence" value="ECO:0007669"/>
    <property type="project" value="UniProtKB-UniRule"/>
</dbReference>
<dbReference type="GO" id="GO:0051258">
    <property type="term" value="P:protein polymerization"/>
    <property type="evidence" value="ECO:0007669"/>
    <property type="project" value="UniProtKB-UniRule"/>
</dbReference>
<dbReference type="CDD" id="cd02201">
    <property type="entry name" value="FtsZ_type1"/>
    <property type="match status" value="1"/>
</dbReference>
<dbReference type="FunFam" id="3.30.1330.20:FF:000005">
    <property type="entry name" value="Cell division protein FtsZ"/>
    <property type="match status" value="1"/>
</dbReference>
<dbReference type="FunFam" id="3.40.50.1440:FF:000023">
    <property type="entry name" value="Cell division protein FtsZ"/>
    <property type="match status" value="1"/>
</dbReference>
<dbReference type="Gene3D" id="3.30.1330.20">
    <property type="entry name" value="Tubulin/FtsZ, C-terminal domain"/>
    <property type="match status" value="1"/>
</dbReference>
<dbReference type="Gene3D" id="3.40.50.1440">
    <property type="entry name" value="Tubulin/FtsZ, GTPase domain"/>
    <property type="match status" value="1"/>
</dbReference>
<dbReference type="HAMAP" id="MF_00909">
    <property type="entry name" value="FtsZ"/>
    <property type="match status" value="1"/>
</dbReference>
<dbReference type="InterPro" id="IPR000158">
    <property type="entry name" value="Cell_div_FtsZ"/>
</dbReference>
<dbReference type="InterPro" id="IPR020805">
    <property type="entry name" value="Cell_div_FtsZ_CS"/>
</dbReference>
<dbReference type="InterPro" id="IPR045061">
    <property type="entry name" value="FtsZ/CetZ"/>
</dbReference>
<dbReference type="InterPro" id="IPR024757">
    <property type="entry name" value="FtsZ_C"/>
</dbReference>
<dbReference type="InterPro" id="IPR008280">
    <property type="entry name" value="Tub_FtsZ_C"/>
</dbReference>
<dbReference type="InterPro" id="IPR037103">
    <property type="entry name" value="Tubulin/FtsZ-like_C"/>
</dbReference>
<dbReference type="InterPro" id="IPR018316">
    <property type="entry name" value="Tubulin/FtsZ_2-layer-sand-dom"/>
</dbReference>
<dbReference type="InterPro" id="IPR036525">
    <property type="entry name" value="Tubulin/FtsZ_GTPase_sf"/>
</dbReference>
<dbReference type="InterPro" id="IPR003008">
    <property type="entry name" value="Tubulin_FtsZ_GTPase"/>
</dbReference>
<dbReference type="NCBIfam" id="TIGR00065">
    <property type="entry name" value="ftsZ"/>
    <property type="match status" value="1"/>
</dbReference>
<dbReference type="PANTHER" id="PTHR30314">
    <property type="entry name" value="CELL DIVISION PROTEIN FTSZ-RELATED"/>
    <property type="match status" value="1"/>
</dbReference>
<dbReference type="PANTHER" id="PTHR30314:SF3">
    <property type="entry name" value="MITOCHONDRIAL DIVISION PROTEIN FSZA"/>
    <property type="match status" value="1"/>
</dbReference>
<dbReference type="Pfam" id="PF12327">
    <property type="entry name" value="FtsZ_C"/>
    <property type="match status" value="1"/>
</dbReference>
<dbReference type="Pfam" id="PF00091">
    <property type="entry name" value="Tubulin"/>
    <property type="match status" value="1"/>
</dbReference>
<dbReference type="PRINTS" id="PR00423">
    <property type="entry name" value="CELLDVISFTSZ"/>
</dbReference>
<dbReference type="SMART" id="SM00864">
    <property type="entry name" value="Tubulin"/>
    <property type="match status" value="1"/>
</dbReference>
<dbReference type="SMART" id="SM00865">
    <property type="entry name" value="Tubulin_C"/>
    <property type="match status" value="1"/>
</dbReference>
<dbReference type="SUPFAM" id="SSF55307">
    <property type="entry name" value="Tubulin C-terminal domain-like"/>
    <property type="match status" value="1"/>
</dbReference>
<dbReference type="SUPFAM" id="SSF52490">
    <property type="entry name" value="Tubulin nucleotide-binding domain-like"/>
    <property type="match status" value="1"/>
</dbReference>
<dbReference type="PROSITE" id="PS01134">
    <property type="entry name" value="FTSZ_1"/>
    <property type="match status" value="1"/>
</dbReference>
<dbReference type="PROSITE" id="PS01135">
    <property type="entry name" value="FTSZ_2"/>
    <property type="match status" value="1"/>
</dbReference>
<accession>P0A031</accession>
<accession>P45498</accession>
<comment type="function">
    <text evidence="1">Essential cell division protein that forms a contractile ring structure (Z ring) at the future cell division site. The regulation of the ring assembly controls the timing and the location of cell division. One of the functions of the FtsZ ring is to recruit other cell division proteins to the septum to produce a new cell wall between the dividing cells. Binds GTP and shows GTPase activity.</text>
</comment>
<comment type="subunit">
    <text evidence="1 3">Homodimer. Polymerizes to form a dynamic ring structure in a strictly GTP-dependent manner. Interacts directly with several other division proteins (By similarity). Interacts with FtsA.</text>
</comment>
<comment type="subcellular location">
    <subcellularLocation>
        <location evidence="1">Cytoplasm</location>
    </subcellularLocation>
    <text evidence="1">Assembles at midcell at the inner surface of the cytoplasmic membrane.</text>
</comment>
<comment type="similarity">
    <text evidence="1">Belongs to the FtsZ family.</text>
</comment>
<comment type="online information" name="Protein Spotlight">
    <link uri="https://www.proteinspotlight.org/back_issues/171/"/>
    <text>Becoming two - Issue 171 of July 2015</text>
</comment>
<feature type="chain" id="PRO_0000114385" description="Cell division protein FtsZ">
    <location>
        <begin position="1"/>
        <end position="390"/>
    </location>
</feature>
<feature type="region of interest" description="Disordered" evidence="2">
    <location>
        <begin position="315"/>
        <end position="390"/>
    </location>
</feature>
<feature type="region of interest" description="Interaction with FtsA">
    <location>
        <begin position="371"/>
        <end position="380"/>
    </location>
</feature>
<feature type="compositionally biased region" description="Polar residues" evidence="2">
    <location>
        <begin position="326"/>
        <end position="360"/>
    </location>
</feature>
<feature type="compositionally biased region" description="Basic and acidic residues" evidence="2">
    <location>
        <begin position="361"/>
        <end position="384"/>
    </location>
</feature>
<feature type="binding site" evidence="1">
    <location>
        <begin position="21"/>
        <end position="25"/>
    </location>
    <ligand>
        <name>GTP</name>
        <dbReference type="ChEBI" id="CHEBI:37565"/>
    </ligand>
</feature>
<feature type="binding site" evidence="1">
    <location>
        <begin position="108"/>
        <end position="110"/>
    </location>
    <ligand>
        <name>GTP</name>
        <dbReference type="ChEBI" id="CHEBI:37565"/>
    </ligand>
</feature>
<feature type="binding site" evidence="1">
    <location>
        <position position="139"/>
    </location>
    <ligand>
        <name>GTP</name>
        <dbReference type="ChEBI" id="CHEBI:37565"/>
    </ligand>
</feature>
<feature type="binding site" evidence="1">
    <location>
        <position position="143"/>
    </location>
    <ligand>
        <name>GTP</name>
        <dbReference type="ChEBI" id="CHEBI:37565"/>
    </ligand>
</feature>
<feature type="binding site" evidence="1">
    <location>
        <position position="187"/>
    </location>
    <ligand>
        <name>GTP</name>
        <dbReference type="ChEBI" id="CHEBI:37565"/>
    </ligand>
</feature>
<feature type="mutagenesis site" description="Does not affect interaction with FtsA and FtsZ." evidence="3">
    <original>D</original>
    <variation>A</variation>
    <location>
        <position position="371"/>
    </location>
</feature>
<feature type="mutagenesis site" description="Does not affect interaction with FtsA and FtsZ." evidence="3">
    <original>D</original>
    <variation>A</variation>
    <location>
        <position position="372"/>
    </location>
</feature>
<feature type="mutagenesis site" description="Does not affect interaction with FtsA and FtsZ." evidence="3">
    <original>I</original>
    <variation>P</variation>
    <location>
        <position position="373"/>
    </location>
</feature>
<feature type="mutagenesis site" description="Does not affect interaction with FtsA and FtsZ." evidence="3">
    <original>P</original>
    <variation>A</variation>
    <location>
        <position position="374"/>
    </location>
</feature>
<feature type="mutagenesis site" description="Does not affect interaction with FtsA and FtsZ." evidence="3">
    <original>S</original>
    <variation>A</variation>
    <location>
        <position position="375"/>
    </location>
</feature>
<feature type="mutagenesis site" description="No interaction with FtsA, but does not affect interaction with FtsZ." evidence="3">
    <original>F</original>
    <variation>A</variation>
    <location>
        <position position="376"/>
    </location>
</feature>
<feature type="mutagenesis site" description="Does not affect interaction with FtsA and FtsZ." evidence="3">
    <original>I</original>
    <variation>A</variation>
    <location>
        <position position="377"/>
    </location>
</feature>
<feature type="mutagenesis site" description="Does not affect interaction with FtsA and FtsZ." evidence="3">
    <original>R</original>
    <variation>A</variation>
    <location>
        <position position="378"/>
    </location>
</feature>
<feature type="mutagenesis site" description="Does not affect interaction with FtsA and FtsZ." evidence="3">
    <original>N</original>
    <variation>A</variation>
    <location>
        <position position="379"/>
    </location>
</feature>
<feature type="mutagenesis site" description="Does not affect interaction with FtsA and FtsZ." evidence="3">
    <original>R</original>
    <variation>A</variation>
    <location>
        <position position="380"/>
    </location>
</feature>
<feature type="strand" evidence="4">
    <location>
        <begin position="14"/>
        <end position="19"/>
    </location>
</feature>
<feature type="helix" evidence="4">
    <location>
        <begin position="20"/>
        <end position="33"/>
    </location>
</feature>
<feature type="strand" evidence="4">
    <location>
        <begin position="39"/>
        <end position="45"/>
    </location>
</feature>
<feature type="helix" evidence="4">
    <location>
        <begin position="47"/>
        <end position="51"/>
    </location>
</feature>
<feature type="strand" evidence="4">
    <location>
        <begin position="56"/>
        <end position="60"/>
    </location>
</feature>
<feature type="helix" evidence="4">
    <location>
        <begin position="63"/>
        <end position="66"/>
    </location>
</feature>
<feature type="helix" evidence="4">
    <location>
        <begin position="75"/>
        <end position="84"/>
    </location>
</feature>
<feature type="helix" evidence="4">
    <location>
        <begin position="86"/>
        <end position="93"/>
    </location>
</feature>
<feature type="strand" evidence="4">
    <location>
        <begin position="97"/>
        <end position="104"/>
    </location>
</feature>
<feature type="helix" evidence="4">
    <location>
        <begin position="109"/>
        <end position="123"/>
    </location>
</feature>
<feature type="strand" evidence="4">
    <location>
        <begin position="127"/>
        <end position="134"/>
    </location>
</feature>
<feature type="helix" evidence="4">
    <location>
        <begin position="137"/>
        <end position="139"/>
    </location>
</feature>
<feature type="helix" evidence="4">
    <location>
        <begin position="141"/>
        <end position="157"/>
    </location>
</feature>
<feature type="strand" evidence="4">
    <location>
        <begin position="158"/>
        <end position="165"/>
    </location>
</feature>
<feature type="helix" evidence="4">
    <location>
        <begin position="166"/>
        <end position="171"/>
    </location>
</feature>
<feature type="strand" evidence="6">
    <location>
        <begin position="175"/>
        <end position="177"/>
    </location>
</feature>
<feature type="helix" evidence="4">
    <location>
        <begin position="179"/>
        <end position="202"/>
    </location>
</feature>
<feature type="strand" evidence="7">
    <location>
        <begin position="205"/>
        <end position="207"/>
    </location>
</feature>
<feature type="helix" evidence="4">
    <location>
        <begin position="211"/>
        <end position="218"/>
    </location>
</feature>
<feature type="strand" evidence="4">
    <location>
        <begin position="225"/>
        <end position="233"/>
    </location>
</feature>
<feature type="helix" evidence="4">
    <location>
        <begin position="236"/>
        <end position="245"/>
    </location>
</feature>
<feature type="turn" evidence="7">
    <location>
        <begin position="248"/>
        <end position="250"/>
    </location>
</feature>
<feature type="helix" evidence="5">
    <location>
        <begin position="254"/>
        <end position="256"/>
    </location>
</feature>
<feature type="strand" evidence="4">
    <location>
        <begin position="259"/>
        <end position="266"/>
    </location>
</feature>
<feature type="helix" evidence="4">
    <location>
        <begin position="272"/>
        <end position="286"/>
    </location>
</feature>
<feature type="strand" evidence="4">
    <location>
        <begin position="292"/>
        <end position="298"/>
    </location>
</feature>
<feature type="helix" evidence="4">
    <location>
        <begin position="300"/>
        <end position="302"/>
    </location>
</feature>
<feature type="strand" evidence="4">
    <location>
        <begin position="305"/>
        <end position="313"/>
    </location>
</feature>
<keyword id="KW-0002">3D-structure</keyword>
<keyword id="KW-0131">Cell cycle</keyword>
<keyword id="KW-0132">Cell division</keyword>
<keyword id="KW-0963">Cytoplasm</keyword>
<keyword id="KW-0342">GTP-binding</keyword>
<keyword id="KW-0547">Nucleotide-binding</keyword>
<keyword id="KW-0717">Septation</keyword>
<name>FTSZ_STAAU</name>
<gene>
    <name evidence="1" type="primary">ftsZ</name>
</gene>
<proteinExistence type="evidence at protein level"/>